<evidence type="ECO:0000250" key="1">
    <source>
        <dbReference type="UniProtKB" id="Q2FYQ8"/>
    </source>
</evidence>
<evidence type="ECO:0000255" key="2">
    <source>
        <dbReference type="PROSITE-ProRule" id="PRU00434"/>
    </source>
</evidence>
<evidence type="ECO:0000305" key="3"/>
<keyword id="KW-0067">ATP-binding</keyword>
<keyword id="KW-1003">Cell membrane</keyword>
<keyword id="KW-0406">Ion transport</keyword>
<keyword id="KW-0472">Membrane</keyword>
<keyword id="KW-0533">Nickel</keyword>
<keyword id="KW-0921">Nickel transport</keyword>
<keyword id="KW-0547">Nucleotide-binding</keyword>
<keyword id="KW-1278">Translocase</keyword>
<keyword id="KW-0813">Transport</keyword>
<name>NIKE_STAAS</name>
<dbReference type="EC" id="7.2.2.11" evidence="1"/>
<dbReference type="EMBL" id="BX571857">
    <property type="protein sequence ID" value="CAG43096.1"/>
    <property type="molecule type" value="Genomic_DNA"/>
</dbReference>
<dbReference type="RefSeq" id="WP_000571247.1">
    <property type="nucleotide sequence ID" value="NC_002953.3"/>
</dbReference>
<dbReference type="SMR" id="Q6G9I1"/>
<dbReference type="KEGG" id="sas:SAS1320"/>
<dbReference type="HOGENOM" id="CLU_000604_1_23_9"/>
<dbReference type="GO" id="GO:0005886">
    <property type="term" value="C:plasma membrane"/>
    <property type="evidence" value="ECO:0007669"/>
    <property type="project" value="UniProtKB-SubCell"/>
</dbReference>
<dbReference type="GO" id="GO:0015413">
    <property type="term" value="F:ABC-type nickel transporter activity"/>
    <property type="evidence" value="ECO:0007669"/>
    <property type="project" value="UniProtKB-EC"/>
</dbReference>
<dbReference type="GO" id="GO:0005524">
    <property type="term" value="F:ATP binding"/>
    <property type="evidence" value="ECO:0007669"/>
    <property type="project" value="UniProtKB-KW"/>
</dbReference>
<dbReference type="GO" id="GO:0016887">
    <property type="term" value="F:ATP hydrolysis activity"/>
    <property type="evidence" value="ECO:0007669"/>
    <property type="project" value="InterPro"/>
</dbReference>
<dbReference type="CDD" id="cd03257">
    <property type="entry name" value="ABC_NikE_OppD_transporters"/>
    <property type="match status" value="1"/>
</dbReference>
<dbReference type="FunFam" id="3.40.50.300:FF:001829">
    <property type="entry name" value="Nickel import system ATP-binding protein NikE"/>
    <property type="match status" value="1"/>
</dbReference>
<dbReference type="Gene3D" id="3.40.50.300">
    <property type="entry name" value="P-loop containing nucleotide triphosphate hydrolases"/>
    <property type="match status" value="1"/>
</dbReference>
<dbReference type="InterPro" id="IPR003593">
    <property type="entry name" value="AAA+_ATPase"/>
</dbReference>
<dbReference type="InterPro" id="IPR050319">
    <property type="entry name" value="ABC_transp_ATP-bind"/>
</dbReference>
<dbReference type="InterPro" id="IPR003439">
    <property type="entry name" value="ABC_transporter-like_ATP-bd"/>
</dbReference>
<dbReference type="InterPro" id="IPR027417">
    <property type="entry name" value="P-loop_NTPase"/>
</dbReference>
<dbReference type="PANTHER" id="PTHR43776">
    <property type="entry name" value="TRANSPORT ATP-BINDING PROTEIN"/>
    <property type="match status" value="1"/>
</dbReference>
<dbReference type="Pfam" id="PF00005">
    <property type="entry name" value="ABC_tran"/>
    <property type="match status" value="1"/>
</dbReference>
<dbReference type="SMART" id="SM00382">
    <property type="entry name" value="AAA"/>
    <property type="match status" value="1"/>
</dbReference>
<dbReference type="SUPFAM" id="SSF52540">
    <property type="entry name" value="P-loop containing nucleoside triphosphate hydrolases"/>
    <property type="match status" value="1"/>
</dbReference>
<dbReference type="PROSITE" id="PS50893">
    <property type="entry name" value="ABC_TRANSPORTER_2"/>
    <property type="match status" value="1"/>
</dbReference>
<reference key="1">
    <citation type="journal article" date="2004" name="Proc. Natl. Acad. Sci. U.S.A.">
        <title>Complete genomes of two clinical Staphylococcus aureus strains: evidence for the rapid evolution of virulence and drug resistance.</title>
        <authorList>
            <person name="Holden M.T.G."/>
            <person name="Feil E.J."/>
            <person name="Lindsay J.A."/>
            <person name="Peacock S.J."/>
            <person name="Day N.P.J."/>
            <person name="Enright M.C."/>
            <person name="Foster T.J."/>
            <person name="Moore C.E."/>
            <person name="Hurst L."/>
            <person name="Atkin R."/>
            <person name="Barron A."/>
            <person name="Bason N."/>
            <person name="Bentley S.D."/>
            <person name="Chillingworth C."/>
            <person name="Chillingworth T."/>
            <person name="Churcher C."/>
            <person name="Clark L."/>
            <person name="Corton C."/>
            <person name="Cronin A."/>
            <person name="Doggett J."/>
            <person name="Dowd L."/>
            <person name="Feltwell T."/>
            <person name="Hance Z."/>
            <person name="Harris B."/>
            <person name="Hauser H."/>
            <person name="Holroyd S."/>
            <person name="Jagels K."/>
            <person name="James K.D."/>
            <person name="Lennard N."/>
            <person name="Line A."/>
            <person name="Mayes R."/>
            <person name="Moule S."/>
            <person name="Mungall K."/>
            <person name="Ormond D."/>
            <person name="Quail M.A."/>
            <person name="Rabbinowitsch E."/>
            <person name="Rutherford K.M."/>
            <person name="Sanders M."/>
            <person name="Sharp S."/>
            <person name="Simmonds M."/>
            <person name="Stevens K."/>
            <person name="Whitehead S."/>
            <person name="Barrell B.G."/>
            <person name="Spratt B.G."/>
            <person name="Parkhill J."/>
        </authorList>
    </citation>
    <scope>NUCLEOTIDE SEQUENCE [LARGE SCALE GENOMIC DNA]</scope>
    <source>
        <strain>MSSA476</strain>
    </source>
</reference>
<organism>
    <name type="scientific">Staphylococcus aureus (strain MSSA476)</name>
    <dbReference type="NCBI Taxonomy" id="282459"/>
    <lineage>
        <taxon>Bacteria</taxon>
        <taxon>Bacillati</taxon>
        <taxon>Bacillota</taxon>
        <taxon>Bacilli</taxon>
        <taxon>Bacillales</taxon>
        <taxon>Staphylococcaceae</taxon>
        <taxon>Staphylococcus</taxon>
    </lineage>
</organism>
<feature type="chain" id="PRO_0000276804" description="Nickel import system ATP-binding protein NikE">
    <location>
        <begin position="1"/>
        <end position="233"/>
    </location>
</feature>
<feature type="domain" description="ABC transporter" evidence="2">
    <location>
        <begin position="2"/>
        <end position="228"/>
    </location>
</feature>
<feature type="binding site" evidence="2">
    <location>
        <begin position="35"/>
        <end position="42"/>
    </location>
    <ligand>
        <name>ATP</name>
        <dbReference type="ChEBI" id="CHEBI:30616"/>
    </ligand>
</feature>
<accession>Q6G9I1</accession>
<sequence length="233" mass="26229">MIELKHVTFGYNKKQMVLQDINITIPDGENVGILGESGCGKSTLASLVLGLFKPAKGEIYLSDNAVLPIFQHPLTSFNPDWTIETSLKEALYYYRGLTDNTAQDQLLLQHLSTFELNAQLLTKLPSEVSGGQLQRFNVMRSLLAQPRVLICDEITSNLDVIAEQNVINILKAQTITNLNHFIVISHDLSVLQRLVNRIIVLKDGMIVDDFAIEELFNVDRHPYTKELVQAFSY</sequence>
<comment type="function">
    <text evidence="1">Part of the ABC transporter complex NikABCDE (Opp2) involved in nickel import. Probably responsible for energy coupling to the transport system.</text>
</comment>
<comment type="catalytic activity">
    <reaction evidence="1">
        <text>Ni(2+)(out) + ATP + H2O = Ni(2+)(in) + ADP + phosphate + H(+)</text>
        <dbReference type="Rhea" id="RHEA:15557"/>
        <dbReference type="ChEBI" id="CHEBI:15377"/>
        <dbReference type="ChEBI" id="CHEBI:15378"/>
        <dbReference type="ChEBI" id="CHEBI:30616"/>
        <dbReference type="ChEBI" id="CHEBI:43474"/>
        <dbReference type="ChEBI" id="CHEBI:49786"/>
        <dbReference type="ChEBI" id="CHEBI:456216"/>
        <dbReference type="EC" id="7.2.2.11"/>
    </reaction>
    <physiologicalReaction direction="left-to-right" evidence="1">
        <dbReference type="Rhea" id="RHEA:15558"/>
    </physiologicalReaction>
</comment>
<comment type="subunit">
    <text evidence="1">The complex is composed of two ATP-binding proteins (NikD and NikE), two transmembrane proteins (NikB and NikC) and a solute-binding protein (NikA).</text>
</comment>
<comment type="subcellular location">
    <subcellularLocation>
        <location evidence="3">Cell membrane</location>
        <topology evidence="3">Peripheral membrane protein</topology>
    </subcellularLocation>
</comment>
<comment type="similarity">
    <text evidence="3">Belongs to the ABC transporter superfamily.</text>
</comment>
<proteinExistence type="inferred from homology"/>
<gene>
    <name evidence="1" type="primary">nikE</name>
    <name type="synonym">oppF2</name>
    <name type="ordered locus">SAS1320</name>
</gene>
<protein>
    <recommendedName>
        <fullName evidence="1">Nickel import system ATP-binding protein NikE</fullName>
        <ecNumber evidence="1">7.2.2.11</ecNumber>
    </recommendedName>
</protein>